<organism>
    <name type="scientific">Zea mays</name>
    <name type="common">Maize</name>
    <dbReference type="NCBI Taxonomy" id="4577"/>
    <lineage>
        <taxon>Eukaryota</taxon>
        <taxon>Viridiplantae</taxon>
        <taxon>Streptophyta</taxon>
        <taxon>Embryophyta</taxon>
        <taxon>Tracheophyta</taxon>
        <taxon>Spermatophyta</taxon>
        <taxon>Magnoliopsida</taxon>
        <taxon>Liliopsida</taxon>
        <taxon>Poales</taxon>
        <taxon>Poaceae</taxon>
        <taxon>PACMAD clade</taxon>
        <taxon>Panicoideae</taxon>
        <taxon>Andropogonodae</taxon>
        <taxon>Andropogoneae</taxon>
        <taxon>Tripsacinae</taxon>
        <taxon>Zea</taxon>
    </lineage>
</organism>
<proteinExistence type="evidence at transcript level"/>
<reference key="1">
    <citation type="journal article" date="2001" name="Plant J.">
        <title>The S-methylmethionine cycle in angiosperms: ubiquity, antiquity and activity.</title>
        <authorList>
            <person name="Ranocha P."/>
            <person name="McNeil S.D."/>
            <person name="Ziemak M.J."/>
            <person name="Li C."/>
            <person name="Tarczynski M.C."/>
            <person name="Hanson A.D."/>
        </authorList>
    </citation>
    <scope>NUCLEOTIDE SEQUENCE [MRNA]</scope>
</reference>
<sequence length="323" mass="34927">MGVLEDLVARAGGCAVIDGGFATQLEALGADINDPLWSAACLITRPHLVKEVHMQYLEAGADVIISSSYQATIPGFIARGMSVAEAEDLLRTSVKLANEARDEFWKSTLRKSKPIYNRALVAASIGSYGAYLADGSEYSGSYGADITAEKLKDFHRRRLQVLASAGPDLIAFEAIPNQMEAQALVELLEEEKVQIPSWICFSSVDGKNLCSGESFADCLKILNASEKVAVVGVNCTPPQFIEGIICEFRKQTKKAIAVYPNSGEVWDGRAKRWLPVECLGHKSFDALAKRWQEAGASLIGGCCRTTPSTIRAVSKILKGRTGH</sequence>
<feature type="chain" id="PRO_0000114614" description="Homocysteine S-methyltransferase 1">
    <location>
        <begin position="1"/>
        <end position="323"/>
    </location>
</feature>
<feature type="domain" description="Hcy-binding" evidence="2">
    <location>
        <begin position="3"/>
        <end position="317"/>
    </location>
</feature>
<feature type="binding site" evidence="2">
    <location>
        <position position="235"/>
    </location>
    <ligand>
        <name>Zn(2+)</name>
        <dbReference type="ChEBI" id="CHEBI:29105"/>
    </ligand>
</feature>
<feature type="binding site" evidence="2">
    <location>
        <position position="302"/>
    </location>
    <ligand>
        <name>Zn(2+)</name>
        <dbReference type="ChEBI" id="CHEBI:29105"/>
    </ligand>
</feature>
<feature type="binding site" evidence="2">
    <location>
        <position position="303"/>
    </location>
    <ligand>
        <name>Zn(2+)</name>
        <dbReference type="ChEBI" id="CHEBI:29105"/>
    </ligand>
</feature>
<accession>Q9FUN0</accession>
<keyword id="KW-0028">Amino-acid biosynthesis</keyword>
<keyword id="KW-0479">Metal-binding</keyword>
<keyword id="KW-0486">Methionine biosynthesis</keyword>
<keyword id="KW-0489">Methyltransferase</keyword>
<keyword id="KW-1185">Reference proteome</keyword>
<keyword id="KW-0949">S-adenosyl-L-methionine</keyword>
<keyword id="KW-0808">Transferase</keyword>
<keyword id="KW-0862">Zinc</keyword>
<gene>
    <name type="primary">HMT-1</name>
</gene>
<dbReference type="EC" id="2.1.1.10"/>
<dbReference type="EMBL" id="AF297044">
    <property type="protein sequence ID" value="AAG22537.1"/>
    <property type="molecule type" value="mRNA"/>
</dbReference>
<dbReference type="RefSeq" id="NP_001105011.1">
    <property type="nucleotide sequence ID" value="NM_001111541.1"/>
</dbReference>
<dbReference type="SMR" id="Q9FUN0"/>
<dbReference type="FunCoup" id="Q9FUN0">
    <property type="interactions" value="436"/>
</dbReference>
<dbReference type="STRING" id="4577.Q9FUN0"/>
<dbReference type="PaxDb" id="4577-GRMZM6G310687_P02"/>
<dbReference type="EnsemblPlants" id="Zm00001eb399940_T001">
    <property type="protein sequence ID" value="Zm00001eb399940_P001"/>
    <property type="gene ID" value="Zm00001eb399940"/>
</dbReference>
<dbReference type="GeneID" id="541873"/>
<dbReference type="Gramene" id="Zm00001eb399940_T001">
    <property type="protein sequence ID" value="Zm00001eb399940_P001"/>
    <property type="gene ID" value="Zm00001eb399940"/>
</dbReference>
<dbReference type="KEGG" id="zma:541873"/>
<dbReference type="eggNOG" id="KOG1579">
    <property type="taxonomic scope" value="Eukaryota"/>
</dbReference>
<dbReference type="HOGENOM" id="CLU_004914_3_2_1"/>
<dbReference type="InParanoid" id="Q9FUN0"/>
<dbReference type="OMA" id="FHRPRMK"/>
<dbReference type="OrthoDB" id="261426at2759"/>
<dbReference type="Proteomes" id="UP000007305">
    <property type="component" value="Chromosome 9"/>
</dbReference>
<dbReference type="ExpressionAtlas" id="Q9FUN0">
    <property type="expression patterns" value="baseline and differential"/>
</dbReference>
<dbReference type="GO" id="GO:0008898">
    <property type="term" value="F:S-adenosylmethionine-homocysteine S-methyltransferase activity"/>
    <property type="evidence" value="ECO:0007669"/>
    <property type="project" value="EnsemblPlants"/>
</dbReference>
<dbReference type="GO" id="GO:0061627">
    <property type="term" value="F:S-methylmethionine-homocysteine S-methyltransferase activity"/>
    <property type="evidence" value="ECO:0007669"/>
    <property type="project" value="RHEA"/>
</dbReference>
<dbReference type="GO" id="GO:0008270">
    <property type="term" value="F:zinc ion binding"/>
    <property type="evidence" value="ECO:0007669"/>
    <property type="project" value="InterPro"/>
</dbReference>
<dbReference type="GO" id="GO:0009086">
    <property type="term" value="P:methionine biosynthetic process"/>
    <property type="evidence" value="ECO:0007669"/>
    <property type="project" value="UniProtKB-KW"/>
</dbReference>
<dbReference type="GO" id="GO:0032259">
    <property type="term" value="P:methylation"/>
    <property type="evidence" value="ECO:0007669"/>
    <property type="project" value="UniProtKB-KW"/>
</dbReference>
<dbReference type="FunFam" id="3.20.20.330:FF:000002">
    <property type="entry name" value="Homocysteine S-methyltransferase"/>
    <property type="match status" value="1"/>
</dbReference>
<dbReference type="Gene3D" id="3.20.20.330">
    <property type="entry name" value="Homocysteine-binding-like domain"/>
    <property type="match status" value="1"/>
</dbReference>
<dbReference type="InterPro" id="IPR017226">
    <property type="entry name" value="Betaine-hCys_S-MeTrfase_BHMT"/>
</dbReference>
<dbReference type="InterPro" id="IPR003726">
    <property type="entry name" value="HCY_dom"/>
</dbReference>
<dbReference type="InterPro" id="IPR036589">
    <property type="entry name" value="HCY_dom_sf"/>
</dbReference>
<dbReference type="InterPro" id="IPR051486">
    <property type="entry name" value="Hcy_S-methyltransferase"/>
</dbReference>
<dbReference type="NCBIfam" id="NF007020">
    <property type="entry name" value="PRK09485.1"/>
    <property type="match status" value="1"/>
</dbReference>
<dbReference type="PANTHER" id="PTHR46015:SF7">
    <property type="entry name" value="HOMOCYSTEINE S-METHYLTRANSFERASE 1"/>
    <property type="match status" value="1"/>
</dbReference>
<dbReference type="PANTHER" id="PTHR46015">
    <property type="entry name" value="ZGC:172121"/>
    <property type="match status" value="1"/>
</dbReference>
<dbReference type="Pfam" id="PF02574">
    <property type="entry name" value="S-methyl_trans"/>
    <property type="match status" value="1"/>
</dbReference>
<dbReference type="PIRSF" id="PIRSF037505">
    <property type="entry name" value="Betaine_HMT"/>
    <property type="match status" value="1"/>
</dbReference>
<dbReference type="SUPFAM" id="SSF82282">
    <property type="entry name" value="Homocysteine S-methyltransferase"/>
    <property type="match status" value="1"/>
</dbReference>
<dbReference type="PROSITE" id="PS50970">
    <property type="entry name" value="HCY"/>
    <property type="match status" value="1"/>
</dbReference>
<protein>
    <recommendedName>
        <fullName>Homocysteine S-methyltransferase 1</fullName>
        <ecNumber>2.1.1.10</ecNumber>
    </recommendedName>
    <alternativeName>
        <fullName>S-methylmethionine:homocysteine methyltransferase 1</fullName>
        <shortName>SMM:Hcy S-methyltransferase 1</shortName>
    </alternativeName>
    <alternativeName>
        <fullName>ZmHMT-1</fullName>
    </alternativeName>
</protein>
<name>HMT1_MAIZE</name>
<comment type="function">
    <text evidence="1">Catalyzes methyl transfer from S-methylmethionine (SMM) to adenosyl-L-homocysteine (AdoMet). SMM degradation (by HMT-1, HMT-2, HMT-3 and HMT-4) and biosynthesis (by MMT1) constitute the SMM cycle in plants, which is probably required to achieve short term control of AdoMet level (By similarity).</text>
</comment>
<comment type="catalytic activity">
    <reaction>
        <text>S-methyl-L-methionine + L-homocysteine = 2 L-methionine + H(+)</text>
        <dbReference type="Rhea" id="RHEA:26337"/>
        <dbReference type="ChEBI" id="CHEBI:15378"/>
        <dbReference type="ChEBI" id="CHEBI:57844"/>
        <dbReference type="ChEBI" id="CHEBI:58199"/>
        <dbReference type="ChEBI" id="CHEBI:58252"/>
        <dbReference type="EC" id="2.1.1.10"/>
    </reaction>
</comment>
<comment type="cofactor">
    <cofactor evidence="2">
        <name>Zn(2+)</name>
        <dbReference type="ChEBI" id="CHEBI:29105"/>
    </cofactor>
</comment>
<comment type="subunit">
    <text evidence="1">Monomer.</text>
</comment>
<evidence type="ECO:0000250" key="1"/>
<evidence type="ECO:0000255" key="2">
    <source>
        <dbReference type="PROSITE-ProRule" id="PRU00333"/>
    </source>
</evidence>